<sequence length="293" mass="33882">MASQVNALLLPVIESTPLHQITKVALTTTLTSKQSDYKFKEIAVPLTKSLQLYEKAQRRQDLRASLKALESIIYQTHFQWNNPLPRHAHLFQKHYHFLLTHWPFENHRDLVDSIAVNNGKLNSTSSRSVWLKADWITLFNVKNPWVQTPPSLMRLSGTDLDTFTPERIFLINSLGNHYKFLIANSHLSYNHKKYPSPGVQIPIRNALGEVSPAKQIAQLFARQLSHIYKSLFIENPPLSPENELALTAVFYDETVERRLRRLYMRACARAYTTTNADSTTEPLMFHCTRWEVD</sequence>
<comment type="function">
    <text evidence="1">Essential for respiratory growth and required for maintenance of mtDNA. Required for cell survival in the absence of prohibitins (By similarity).</text>
</comment>
<comment type="subcellular location">
    <subcellularLocation>
        <location evidence="1">Mitochondrion</location>
    </subcellularLocation>
</comment>
<comment type="similarity">
    <text evidence="2">Belongs to the GEP5 family.</text>
</comment>
<keyword id="KW-0496">Mitochondrion</keyword>
<dbReference type="EMBL" id="CH408054">
    <property type="protein sequence ID" value="EDV09394.1"/>
    <property type="molecule type" value="Genomic_DNA"/>
</dbReference>
<dbReference type="HOGENOM" id="CLU_079415_0_0_1"/>
<dbReference type="OrthoDB" id="37949at4893"/>
<dbReference type="Proteomes" id="UP000008335">
    <property type="component" value="Unassembled WGS sequence"/>
</dbReference>
<dbReference type="GO" id="GO:0005739">
    <property type="term" value="C:mitochondrion"/>
    <property type="evidence" value="ECO:0007669"/>
    <property type="project" value="UniProtKB-SubCell"/>
</dbReference>
<dbReference type="GO" id="GO:0000002">
    <property type="term" value="P:mitochondrial genome maintenance"/>
    <property type="evidence" value="ECO:0007669"/>
    <property type="project" value="InterPro"/>
</dbReference>
<dbReference type="InterPro" id="IPR031455">
    <property type="entry name" value="Gep5"/>
</dbReference>
<dbReference type="Pfam" id="PF17053">
    <property type="entry name" value="GEP5"/>
    <property type="match status" value="1"/>
</dbReference>
<organism>
    <name type="scientific">Saccharomyces cerevisiae (strain RM11-1a)</name>
    <name type="common">Baker's yeast</name>
    <dbReference type="NCBI Taxonomy" id="285006"/>
    <lineage>
        <taxon>Eukaryota</taxon>
        <taxon>Fungi</taxon>
        <taxon>Dikarya</taxon>
        <taxon>Ascomycota</taxon>
        <taxon>Saccharomycotina</taxon>
        <taxon>Saccharomycetes</taxon>
        <taxon>Saccharomycetales</taxon>
        <taxon>Saccharomycetaceae</taxon>
        <taxon>Saccharomyces</taxon>
    </lineage>
</organism>
<evidence type="ECO:0000250" key="1"/>
<evidence type="ECO:0000305" key="2"/>
<protein>
    <recommendedName>
        <fullName>Genetic interactor of prohibitin 5, mitochondrial</fullName>
    </recommendedName>
    <alternativeName>
        <fullName>Required for respiratory growth protein 5</fullName>
    </alternativeName>
</protein>
<reference key="1">
    <citation type="submission" date="2005-03" db="EMBL/GenBank/DDBJ databases">
        <title>Annotation of the Saccharomyces cerevisiae RM11-1a genome.</title>
        <authorList>
            <consortium name="The Broad Institute Genome Sequencing Platform"/>
            <person name="Birren B.W."/>
            <person name="Lander E.S."/>
            <person name="Galagan J.E."/>
            <person name="Nusbaum C."/>
            <person name="Devon K."/>
            <person name="Cuomo C."/>
            <person name="Jaffe D.B."/>
            <person name="Butler J."/>
            <person name="Alvarez P."/>
            <person name="Gnerre S."/>
            <person name="Grabherr M."/>
            <person name="Kleber M."/>
            <person name="Mauceli E.W."/>
            <person name="Brockman W."/>
            <person name="MacCallum I.A."/>
            <person name="Rounsley S."/>
            <person name="Young S.K."/>
            <person name="LaButti K."/>
            <person name="Pushparaj V."/>
            <person name="DeCaprio D."/>
            <person name="Crawford M."/>
            <person name="Koehrsen M."/>
            <person name="Engels R."/>
            <person name="Montgomery P."/>
            <person name="Pearson M."/>
            <person name="Howarth C."/>
            <person name="Larson L."/>
            <person name="Luoma S."/>
            <person name="White J."/>
            <person name="O'Leary S."/>
            <person name="Kodira C.D."/>
            <person name="Zeng Q."/>
            <person name="Yandava C."/>
            <person name="Alvarado L."/>
            <person name="Pratt S."/>
            <person name="Kruglyak L."/>
        </authorList>
    </citation>
    <scope>NUCLEOTIDE SEQUENCE [LARGE SCALE GENOMIC DNA]</scope>
    <source>
        <strain>RM11-1a</strain>
    </source>
</reference>
<name>GEP5_YEAS1</name>
<gene>
    <name type="primary">GEP5</name>
    <name type="synonym">RRG5</name>
    <name type="ORF">SCRG_05075</name>
</gene>
<proteinExistence type="inferred from homology"/>
<feature type="chain" id="PRO_0000399688" description="Genetic interactor of prohibitin 5, mitochondrial">
    <location>
        <begin position="1"/>
        <end position="293"/>
    </location>
</feature>
<accession>B3LT59</accession>